<accession>Q5B995</accession>
<accession>C8VJ98</accession>
<proteinExistence type="inferred from homology"/>
<protein>
    <recommendedName>
        <fullName>Non-histone chromosomal protein 6</fullName>
    </recommendedName>
</protein>
<keyword id="KW-0158">Chromosome</keyword>
<keyword id="KW-0227">DNA damage</keyword>
<keyword id="KW-0234">DNA repair</keyword>
<keyword id="KW-0238">DNA-binding</keyword>
<keyword id="KW-0539">Nucleus</keyword>
<keyword id="KW-1185">Reference proteome</keyword>
<keyword id="KW-0804">Transcription</keyword>
<keyword id="KW-0805">Transcription regulation</keyword>
<sequence>MPKANPTRKTKATRETGGRKKKDPNAPKRGLSAYMFFANDNRDKVREENPGISFGQVGKMLGEKWKSLSDKERKPYEDKAAADKKRYEDEKAAYKAGEAEEDEESS</sequence>
<gene>
    <name type="primary">nhp6</name>
    <name type="ORF">AN2885</name>
</gene>
<evidence type="ECO:0000250" key="1"/>
<evidence type="ECO:0000255" key="2">
    <source>
        <dbReference type="PROSITE-ProRule" id="PRU00267"/>
    </source>
</evidence>
<evidence type="ECO:0000256" key="3">
    <source>
        <dbReference type="SAM" id="MobiDB-lite"/>
    </source>
</evidence>
<evidence type="ECO:0000305" key="4"/>
<name>NHP6_EMENI</name>
<feature type="chain" id="PRO_0000245218" description="Non-histone chromosomal protein 6">
    <location>
        <begin position="1"/>
        <end position="106"/>
    </location>
</feature>
<feature type="DNA-binding region" description="HMG box" evidence="2">
    <location>
        <begin position="27"/>
        <end position="95"/>
    </location>
</feature>
<feature type="region of interest" description="Disordered" evidence="3">
    <location>
        <begin position="1"/>
        <end position="33"/>
    </location>
</feature>
<feature type="region of interest" description="Disordered" evidence="3">
    <location>
        <begin position="60"/>
        <end position="106"/>
    </location>
</feature>
<feature type="compositionally biased region" description="Basic residues" evidence="3">
    <location>
        <begin position="1"/>
        <end position="11"/>
    </location>
</feature>
<feature type="compositionally biased region" description="Basic and acidic residues" evidence="3">
    <location>
        <begin position="12"/>
        <end position="26"/>
    </location>
</feature>
<feature type="compositionally biased region" description="Basic and acidic residues" evidence="3">
    <location>
        <begin position="61"/>
        <end position="93"/>
    </location>
</feature>
<dbReference type="EMBL" id="AACD01000051">
    <property type="protein sequence ID" value="EAA63456.1"/>
    <property type="molecule type" value="Genomic_DNA"/>
</dbReference>
<dbReference type="EMBL" id="BN001306">
    <property type="protein sequence ID" value="CBF83812.1"/>
    <property type="molecule type" value="Genomic_DNA"/>
</dbReference>
<dbReference type="RefSeq" id="XP_660489.1">
    <property type="nucleotide sequence ID" value="XM_655397.1"/>
</dbReference>
<dbReference type="SMR" id="Q5B995"/>
<dbReference type="FunCoup" id="Q5B995">
    <property type="interactions" value="425"/>
</dbReference>
<dbReference type="STRING" id="227321.Q5B995"/>
<dbReference type="EnsemblFungi" id="CBF83812">
    <property type="protein sequence ID" value="CBF83812"/>
    <property type="gene ID" value="ANIA_02885"/>
</dbReference>
<dbReference type="KEGG" id="ani:ANIA_02885"/>
<dbReference type="VEuPathDB" id="FungiDB:AN2885"/>
<dbReference type="eggNOG" id="KOG0381">
    <property type="taxonomic scope" value="Eukaryota"/>
</dbReference>
<dbReference type="HOGENOM" id="CLU_082854_10_1_1"/>
<dbReference type="InParanoid" id="Q5B995"/>
<dbReference type="OMA" id="MKNMGGK"/>
<dbReference type="OrthoDB" id="1919336at2759"/>
<dbReference type="Proteomes" id="UP000000560">
    <property type="component" value="Chromosome VI"/>
</dbReference>
<dbReference type="GO" id="GO:0005694">
    <property type="term" value="C:chromosome"/>
    <property type="evidence" value="ECO:0007669"/>
    <property type="project" value="UniProtKB-SubCell"/>
</dbReference>
<dbReference type="GO" id="GO:0005634">
    <property type="term" value="C:nucleus"/>
    <property type="evidence" value="ECO:0007669"/>
    <property type="project" value="UniProtKB-SubCell"/>
</dbReference>
<dbReference type="GO" id="GO:0003677">
    <property type="term" value="F:DNA binding"/>
    <property type="evidence" value="ECO:0007669"/>
    <property type="project" value="UniProtKB-KW"/>
</dbReference>
<dbReference type="GO" id="GO:0006281">
    <property type="term" value="P:DNA repair"/>
    <property type="evidence" value="ECO:0007669"/>
    <property type="project" value="UniProtKB-KW"/>
</dbReference>
<dbReference type="CDD" id="cd01390">
    <property type="entry name" value="HMG-box_NHP6-like"/>
    <property type="match status" value="1"/>
</dbReference>
<dbReference type="FunFam" id="1.10.30.10:FF:000016">
    <property type="entry name" value="FACT complex subunit SSRP1"/>
    <property type="match status" value="1"/>
</dbReference>
<dbReference type="Gene3D" id="1.10.30.10">
    <property type="entry name" value="High mobility group box domain"/>
    <property type="match status" value="1"/>
</dbReference>
<dbReference type="InterPro" id="IPR009071">
    <property type="entry name" value="HMG_box_dom"/>
</dbReference>
<dbReference type="InterPro" id="IPR036910">
    <property type="entry name" value="HMG_box_dom_sf"/>
</dbReference>
<dbReference type="InterPro" id="IPR050342">
    <property type="entry name" value="HMGB"/>
</dbReference>
<dbReference type="PANTHER" id="PTHR48112">
    <property type="entry name" value="HIGH MOBILITY GROUP PROTEIN DSP1"/>
    <property type="match status" value="1"/>
</dbReference>
<dbReference type="PANTHER" id="PTHR48112:SF22">
    <property type="entry name" value="MITOCHONDRIAL TRANSCRIPTION FACTOR A, ISOFORM B"/>
    <property type="match status" value="1"/>
</dbReference>
<dbReference type="Pfam" id="PF00505">
    <property type="entry name" value="HMG_box"/>
    <property type="match status" value="1"/>
</dbReference>
<dbReference type="PRINTS" id="PR00886">
    <property type="entry name" value="HIGHMOBLTY12"/>
</dbReference>
<dbReference type="SMART" id="SM00398">
    <property type="entry name" value="HMG"/>
    <property type="match status" value="1"/>
</dbReference>
<dbReference type="SUPFAM" id="SSF47095">
    <property type="entry name" value="HMG-box"/>
    <property type="match status" value="1"/>
</dbReference>
<dbReference type="PROSITE" id="PS50118">
    <property type="entry name" value="HMG_BOX_2"/>
    <property type="match status" value="1"/>
</dbReference>
<comment type="function">
    <text evidence="1">DNA-binding protein that induces severe bending of DNA. Required for DNA-binding by the FACT complex, a general chromatin factor that acts to reorganize nucleosomes. The FACT complex is involved in multiple processes that require DNA as a template such as mRNA elongation, DNA replication and DNA repair. Also augments the fidelity of transcription by RNA polymerase III independently of any role in the FACT complex (By similarity).</text>
</comment>
<comment type="subunit">
    <text evidence="1">Weakly associates with the stable spt16-pob3 heterodimer to form the FACT complex.</text>
</comment>
<comment type="subcellular location">
    <subcellularLocation>
        <location evidence="2">Nucleus</location>
    </subcellularLocation>
    <subcellularLocation>
        <location evidence="1">Chromosome</location>
    </subcellularLocation>
</comment>
<comment type="similarity">
    <text evidence="4">Belongs to the NHP6 family.</text>
</comment>
<organism>
    <name type="scientific">Emericella nidulans (strain FGSC A4 / ATCC 38163 / CBS 112.46 / NRRL 194 / M139)</name>
    <name type="common">Aspergillus nidulans</name>
    <dbReference type="NCBI Taxonomy" id="227321"/>
    <lineage>
        <taxon>Eukaryota</taxon>
        <taxon>Fungi</taxon>
        <taxon>Dikarya</taxon>
        <taxon>Ascomycota</taxon>
        <taxon>Pezizomycotina</taxon>
        <taxon>Eurotiomycetes</taxon>
        <taxon>Eurotiomycetidae</taxon>
        <taxon>Eurotiales</taxon>
        <taxon>Aspergillaceae</taxon>
        <taxon>Aspergillus</taxon>
        <taxon>Aspergillus subgen. Nidulantes</taxon>
    </lineage>
</organism>
<reference key="1">
    <citation type="journal article" date="2005" name="Nature">
        <title>Sequencing of Aspergillus nidulans and comparative analysis with A. fumigatus and A. oryzae.</title>
        <authorList>
            <person name="Galagan J.E."/>
            <person name="Calvo S.E."/>
            <person name="Cuomo C."/>
            <person name="Ma L.-J."/>
            <person name="Wortman J.R."/>
            <person name="Batzoglou S."/>
            <person name="Lee S.-I."/>
            <person name="Bastuerkmen M."/>
            <person name="Spevak C.C."/>
            <person name="Clutterbuck J."/>
            <person name="Kapitonov V."/>
            <person name="Jurka J."/>
            <person name="Scazzocchio C."/>
            <person name="Farman M.L."/>
            <person name="Butler J."/>
            <person name="Purcell S."/>
            <person name="Harris S."/>
            <person name="Braus G.H."/>
            <person name="Draht O."/>
            <person name="Busch S."/>
            <person name="D'Enfert C."/>
            <person name="Bouchier C."/>
            <person name="Goldman G.H."/>
            <person name="Bell-Pedersen D."/>
            <person name="Griffiths-Jones S."/>
            <person name="Doonan J.H."/>
            <person name="Yu J."/>
            <person name="Vienken K."/>
            <person name="Pain A."/>
            <person name="Freitag M."/>
            <person name="Selker E.U."/>
            <person name="Archer D.B."/>
            <person name="Penalva M.A."/>
            <person name="Oakley B.R."/>
            <person name="Momany M."/>
            <person name="Tanaka T."/>
            <person name="Kumagai T."/>
            <person name="Asai K."/>
            <person name="Machida M."/>
            <person name="Nierman W.C."/>
            <person name="Denning D.W."/>
            <person name="Caddick M.X."/>
            <person name="Hynes M."/>
            <person name="Paoletti M."/>
            <person name="Fischer R."/>
            <person name="Miller B.L."/>
            <person name="Dyer P.S."/>
            <person name="Sachs M.S."/>
            <person name="Osmani S.A."/>
            <person name="Birren B.W."/>
        </authorList>
    </citation>
    <scope>NUCLEOTIDE SEQUENCE [LARGE SCALE GENOMIC DNA]</scope>
    <source>
        <strain>FGSC A4 / ATCC 38163 / CBS 112.46 / NRRL 194 / M139</strain>
    </source>
</reference>
<reference key="2">
    <citation type="journal article" date="2009" name="Fungal Genet. Biol.">
        <title>The 2008 update of the Aspergillus nidulans genome annotation: a community effort.</title>
        <authorList>
            <person name="Wortman J.R."/>
            <person name="Gilsenan J.M."/>
            <person name="Joardar V."/>
            <person name="Deegan J."/>
            <person name="Clutterbuck J."/>
            <person name="Andersen M.R."/>
            <person name="Archer D."/>
            <person name="Bencina M."/>
            <person name="Braus G."/>
            <person name="Coutinho P."/>
            <person name="von Dohren H."/>
            <person name="Doonan J."/>
            <person name="Driessen A.J."/>
            <person name="Durek P."/>
            <person name="Espeso E."/>
            <person name="Fekete E."/>
            <person name="Flipphi M."/>
            <person name="Estrada C.G."/>
            <person name="Geysens S."/>
            <person name="Goldman G."/>
            <person name="de Groot P.W."/>
            <person name="Hansen K."/>
            <person name="Harris S.D."/>
            <person name="Heinekamp T."/>
            <person name="Helmstaedt K."/>
            <person name="Henrissat B."/>
            <person name="Hofmann G."/>
            <person name="Homan T."/>
            <person name="Horio T."/>
            <person name="Horiuchi H."/>
            <person name="James S."/>
            <person name="Jones M."/>
            <person name="Karaffa L."/>
            <person name="Karanyi Z."/>
            <person name="Kato M."/>
            <person name="Keller N."/>
            <person name="Kelly D.E."/>
            <person name="Kiel J.A."/>
            <person name="Kim J.M."/>
            <person name="van der Klei I.J."/>
            <person name="Klis F.M."/>
            <person name="Kovalchuk A."/>
            <person name="Krasevec N."/>
            <person name="Kubicek C.P."/>
            <person name="Liu B."/>
            <person name="Maccabe A."/>
            <person name="Meyer V."/>
            <person name="Mirabito P."/>
            <person name="Miskei M."/>
            <person name="Mos M."/>
            <person name="Mullins J."/>
            <person name="Nelson D.R."/>
            <person name="Nielsen J."/>
            <person name="Oakley B.R."/>
            <person name="Osmani S.A."/>
            <person name="Pakula T."/>
            <person name="Paszewski A."/>
            <person name="Paulsen I."/>
            <person name="Pilsyk S."/>
            <person name="Pocsi I."/>
            <person name="Punt P.J."/>
            <person name="Ram A.F."/>
            <person name="Ren Q."/>
            <person name="Robellet X."/>
            <person name="Robson G."/>
            <person name="Seiboth B."/>
            <person name="van Solingen P."/>
            <person name="Specht T."/>
            <person name="Sun J."/>
            <person name="Taheri-Talesh N."/>
            <person name="Takeshita N."/>
            <person name="Ussery D."/>
            <person name="vanKuyk P.A."/>
            <person name="Visser H."/>
            <person name="van de Vondervoort P.J."/>
            <person name="de Vries R.P."/>
            <person name="Walton J."/>
            <person name="Xiang X."/>
            <person name="Xiong Y."/>
            <person name="Zeng A.P."/>
            <person name="Brandt B.W."/>
            <person name="Cornell M.J."/>
            <person name="van den Hondel C.A."/>
            <person name="Visser J."/>
            <person name="Oliver S.G."/>
            <person name="Turner G."/>
        </authorList>
    </citation>
    <scope>GENOME REANNOTATION</scope>
    <source>
        <strain>FGSC A4 / ATCC 38163 / CBS 112.46 / NRRL 194 / M139</strain>
    </source>
</reference>